<dbReference type="EMBL" id="D13434">
    <property type="protein sequence ID" value="BAA02696.1"/>
    <property type="status" value="ALT_FRAME"/>
    <property type="molecule type" value="mRNA"/>
</dbReference>
<dbReference type="PIR" id="JQ2257">
    <property type="entry name" value="JQ2257"/>
</dbReference>
<dbReference type="GO" id="GO:0005634">
    <property type="term" value="C:nucleus"/>
    <property type="evidence" value="ECO:0007669"/>
    <property type="project" value="UniProtKB-SubCell"/>
</dbReference>
<dbReference type="GO" id="GO:0008541">
    <property type="term" value="C:proteasome regulatory particle, lid subcomplex"/>
    <property type="evidence" value="ECO:0007669"/>
    <property type="project" value="TreeGrafter"/>
</dbReference>
<dbReference type="GO" id="GO:0030234">
    <property type="term" value="F:enzyme regulator activity"/>
    <property type="evidence" value="ECO:0007669"/>
    <property type="project" value="InterPro"/>
</dbReference>
<dbReference type="GO" id="GO:0042176">
    <property type="term" value="P:regulation of protein catabolic process"/>
    <property type="evidence" value="ECO:0007669"/>
    <property type="project" value="InterPro"/>
</dbReference>
<dbReference type="GO" id="GO:0006511">
    <property type="term" value="P:ubiquitin-dependent protein catabolic process"/>
    <property type="evidence" value="ECO:0007669"/>
    <property type="project" value="TreeGrafter"/>
</dbReference>
<dbReference type="FunFam" id="1.25.40.570:FF:000017">
    <property type="entry name" value="26S proteasome non-ATPase regulatory subunit 3"/>
    <property type="match status" value="1"/>
</dbReference>
<dbReference type="Gene3D" id="1.25.40.570">
    <property type="match status" value="1"/>
</dbReference>
<dbReference type="InterPro" id="IPR013586">
    <property type="entry name" value="26S_Psome_reg_C"/>
</dbReference>
<dbReference type="InterPro" id="IPR050756">
    <property type="entry name" value="CSN3"/>
</dbReference>
<dbReference type="InterPro" id="IPR000717">
    <property type="entry name" value="PCI_dom"/>
</dbReference>
<dbReference type="InterPro" id="IPR036390">
    <property type="entry name" value="WH_DNA-bd_sf"/>
</dbReference>
<dbReference type="PANTHER" id="PTHR10758:SF2">
    <property type="entry name" value="26S PROTEASOME NON-ATPASE REGULATORY SUBUNIT 3"/>
    <property type="match status" value="1"/>
</dbReference>
<dbReference type="PANTHER" id="PTHR10758">
    <property type="entry name" value="26S PROTEASOME NON-ATPASE REGULATORY SUBUNIT 3/COP9 SIGNALOSOME COMPLEX SUBUNIT 3"/>
    <property type="match status" value="1"/>
</dbReference>
<dbReference type="Pfam" id="PF01399">
    <property type="entry name" value="PCI"/>
    <property type="match status" value="1"/>
</dbReference>
<dbReference type="Pfam" id="PF08375">
    <property type="entry name" value="Rpn3_C"/>
    <property type="match status" value="1"/>
</dbReference>
<dbReference type="SMART" id="SM00753">
    <property type="entry name" value="PAM"/>
    <property type="match status" value="1"/>
</dbReference>
<dbReference type="SMART" id="SM00088">
    <property type="entry name" value="PINT"/>
    <property type="match status" value="1"/>
</dbReference>
<dbReference type="SUPFAM" id="SSF46785">
    <property type="entry name" value="Winged helix' DNA-binding domain"/>
    <property type="match status" value="1"/>
</dbReference>
<dbReference type="PROSITE" id="PS50250">
    <property type="entry name" value="PCI"/>
    <property type="match status" value="1"/>
</dbReference>
<evidence type="ECO:0000250" key="1"/>
<evidence type="ECO:0000255" key="2">
    <source>
        <dbReference type="PROSITE-ProRule" id="PRU01185"/>
    </source>
</evidence>
<evidence type="ECO:0000256" key="3">
    <source>
        <dbReference type="SAM" id="MobiDB-lite"/>
    </source>
</evidence>
<evidence type="ECO:0000305" key="4"/>
<protein>
    <recommendedName>
        <fullName>Probable 26S proteasome non-ATPase regulatory subunit 3</fullName>
        <shortName>26S proteasome subunit S3</shortName>
    </recommendedName>
    <alternativeName>
        <fullName>26S proteasome regulatory subunit RPN3</fullName>
    </alternativeName>
    <alternativeName>
        <fullName>Nuclear antigen 21D7</fullName>
    </alternativeName>
</protein>
<feature type="chain" id="PRO_0000173824" description="Probable 26S proteasome non-ATPase regulatory subunit 3">
    <location>
        <begin position="1"/>
        <end position="489"/>
    </location>
</feature>
<feature type="domain" description="PCI" evidence="2">
    <location>
        <begin position="241"/>
        <end position="422"/>
    </location>
</feature>
<feature type="region of interest" description="Disordered" evidence="3">
    <location>
        <begin position="1"/>
        <end position="23"/>
    </location>
</feature>
<feature type="region of interest" description="Disordered" evidence="3">
    <location>
        <begin position="454"/>
        <end position="489"/>
    </location>
</feature>
<feature type="compositionally biased region" description="Basic and acidic residues" evidence="3">
    <location>
        <begin position="457"/>
        <end position="482"/>
    </location>
</feature>
<reference key="1">
    <citation type="journal article" date="1993" name="Plant Physiol.">
        <title>Isolation and characterization of a cDNA clone for plant nuclear antigen 21D7 associated with cell division.</title>
        <authorList>
            <person name="Smith M.W."/>
            <person name="Ito M."/>
            <person name="Yamada T."/>
            <person name="Suzuki T."/>
            <person name="Komamine A."/>
        </authorList>
    </citation>
    <scope>NUCLEOTIDE SEQUENCE [MRNA]</scope>
</reference>
<reference key="2">
    <citation type="journal article" date="1997" name="Plant Physiol.">
        <title>Plant 21D7 protein, a nuclear antigen associated with cell division, is a component of the 26S proteasome.</title>
        <authorList>
            <person name="Smith M.W."/>
            <person name="Ito M."/>
            <person name="Miyawaki M."/>
            <person name="Sato S."/>
            <person name="Yoshikawa Y."/>
            <person name="Wada S."/>
            <person name="Maki H."/>
            <person name="Nakagawa H."/>
            <person name="Komamine A."/>
        </authorList>
    </citation>
    <scope>CHARACTERIZATION</scope>
</reference>
<sequence length="489" mass="55529">MTQDVEMKEVPAPAPSNSVTAATPSTLQHLKEIASLIESGAYAREVRRILRAVRLTIALRKKLNASVVNAFLNFSLVPGSEVHARLASYLPKEDEHDMEVDTAMSATTTLAKHSLPELEIYCYLLVLIFLIDQKKYSEAKACSSASIARVKNLNRRTVEVLASRLYFYYSLSYELTGDLAEIRGNLLALHRIATLRHDELGQETLLNLLLRNYLHYNLYDQAEKLRSKAPRFEAHSNQQFCRYLFYLGKIRTIQLEYTDAKESXLQAARKAPVAALGFRVQCNKWAVIVRLLLGEIPERTVFMQKGMEKALRPYFXLTNAVRIGDLELFRXVADKFASTFTADRTHNLIVRLRHNVIRTGLRNISISYSRISLVDVARKLRLDSPNPVADAESIVSKAIRDGAIDATIDHANGWMVSKETGDIYSTNEPQAAFNSRIAFCLNMHNEAVRALRFPANSHKDKESAEKRRERQQQEQELAKHIAEEDDDEF</sequence>
<gene>
    <name type="primary">21D7</name>
</gene>
<name>PSMD3_DAUCA</name>
<keyword id="KW-0539">Nucleus</keyword>
<keyword id="KW-0647">Proteasome</keyword>
<accession>Q06364</accession>
<comment type="function">
    <text>Acts as a regulatory subunit of the 26 proteasome which is involved in the ATP-dependent degradation of ubiquitinated proteins.</text>
</comment>
<comment type="subunit">
    <text evidence="1">The 26S proteasome is composed of a core protease, known as the 20S proteasome, capped at one or both ends by the 19S regulatory complex (RC). The RC is composed of at least 18 different subunits in two subcomplexes, the base and the lid, which form the portions proximal and distal to the 20S proteolytic core, respectively (By similarity).</text>
</comment>
<comment type="subcellular location">
    <subcellularLocation>
        <location>Nucleus</location>
    </subcellularLocation>
</comment>
<comment type="similarity">
    <text evidence="4">Belongs to the proteasome subunit S3 family.</text>
</comment>
<comment type="sequence caution" evidence="4">
    <conflict type="frameshift">
        <sequence resource="EMBL-CDS" id="BAA02696"/>
    </conflict>
</comment>
<organism>
    <name type="scientific">Daucus carota</name>
    <name type="common">Wild carrot</name>
    <dbReference type="NCBI Taxonomy" id="4039"/>
    <lineage>
        <taxon>Eukaryota</taxon>
        <taxon>Viridiplantae</taxon>
        <taxon>Streptophyta</taxon>
        <taxon>Embryophyta</taxon>
        <taxon>Tracheophyta</taxon>
        <taxon>Spermatophyta</taxon>
        <taxon>Magnoliopsida</taxon>
        <taxon>eudicotyledons</taxon>
        <taxon>Gunneridae</taxon>
        <taxon>Pentapetalae</taxon>
        <taxon>asterids</taxon>
        <taxon>campanulids</taxon>
        <taxon>Apiales</taxon>
        <taxon>Apiaceae</taxon>
        <taxon>Apioideae</taxon>
        <taxon>Scandiceae</taxon>
        <taxon>Daucinae</taxon>
        <taxon>Daucus</taxon>
        <taxon>Daucus sect. Daucus</taxon>
    </lineage>
</organism>
<proteinExistence type="evidence at protein level"/>